<evidence type="ECO:0000255" key="1">
    <source>
        <dbReference type="HAMAP-Rule" id="MF_01204"/>
    </source>
</evidence>
<protein>
    <recommendedName>
        <fullName evidence="1">Probable malonic semialdehyde reductase RutE</fullName>
        <ecNumber evidence="1">1.1.1.298</ecNumber>
    </recommendedName>
</protein>
<name>RUTE_ECOLC</name>
<gene>
    <name evidence="1" type="primary">rutE</name>
    <name type="ordered locus">EcolC_2587</name>
</gene>
<organism>
    <name type="scientific">Escherichia coli (strain ATCC 8739 / DSM 1576 / NBRC 3972 / NCIMB 8545 / WDCM 00012 / Crooks)</name>
    <dbReference type="NCBI Taxonomy" id="481805"/>
    <lineage>
        <taxon>Bacteria</taxon>
        <taxon>Pseudomonadati</taxon>
        <taxon>Pseudomonadota</taxon>
        <taxon>Gammaproteobacteria</taxon>
        <taxon>Enterobacterales</taxon>
        <taxon>Enterobacteriaceae</taxon>
        <taxon>Escherichia</taxon>
    </lineage>
</organism>
<comment type="function">
    <text evidence="1">May reduce toxic product malonic semialdehyde to 3-hydroxypropionic acid, which is excreted.</text>
</comment>
<comment type="catalytic activity">
    <reaction evidence="1">
        <text>3-hydroxypropanoate + NADP(+) = 3-oxopropanoate + NADPH + H(+)</text>
        <dbReference type="Rhea" id="RHEA:26438"/>
        <dbReference type="ChEBI" id="CHEBI:15378"/>
        <dbReference type="ChEBI" id="CHEBI:16510"/>
        <dbReference type="ChEBI" id="CHEBI:33190"/>
        <dbReference type="ChEBI" id="CHEBI:57783"/>
        <dbReference type="ChEBI" id="CHEBI:58349"/>
        <dbReference type="EC" id="1.1.1.298"/>
    </reaction>
</comment>
<comment type="cofactor">
    <cofactor evidence="1">
        <name>FMN</name>
        <dbReference type="ChEBI" id="CHEBI:58210"/>
    </cofactor>
</comment>
<comment type="induction">
    <text evidence="1">Up-regulated by the nitrogen regulatory protein C (NtrC also called GlnG) and repressed by RutR.</text>
</comment>
<comment type="similarity">
    <text evidence="1">Belongs to the nitroreductase family. HadB/RutE subfamily.</text>
</comment>
<feature type="chain" id="PRO_1000085519" description="Probable malonic semialdehyde reductase RutE">
    <location>
        <begin position="1"/>
        <end position="196"/>
    </location>
</feature>
<proteinExistence type="inferred from homology"/>
<keyword id="KW-0285">Flavoprotein</keyword>
<keyword id="KW-0288">FMN</keyword>
<keyword id="KW-0520">NAD</keyword>
<keyword id="KW-0521">NADP</keyword>
<keyword id="KW-0560">Oxidoreductase</keyword>
<sequence>MNEAVSPGALSTLFTDARTHNGWRETPVSDETLRELYALMKWGPTSANCSPARIVFIRTAEGKERLRPALSSGNLQKTLTAPVTAIVAWDSEFYERLPQLFPHGDARSWFTSSPQLAEETAFRNSSMQAAYLIIACRALGLDTGPMSGFDRQHVDDAFFAGSTLKSNLLINIGYGDSSKLFARLPRLSFEEACGLL</sequence>
<reference key="1">
    <citation type="submission" date="2008-02" db="EMBL/GenBank/DDBJ databases">
        <title>Complete sequence of Escherichia coli C str. ATCC 8739.</title>
        <authorList>
            <person name="Copeland A."/>
            <person name="Lucas S."/>
            <person name="Lapidus A."/>
            <person name="Glavina del Rio T."/>
            <person name="Dalin E."/>
            <person name="Tice H."/>
            <person name="Bruce D."/>
            <person name="Goodwin L."/>
            <person name="Pitluck S."/>
            <person name="Kiss H."/>
            <person name="Brettin T."/>
            <person name="Detter J.C."/>
            <person name="Han C."/>
            <person name="Kuske C.R."/>
            <person name="Schmutz J."/>
            <person name="Larimer F."/>
            <person name="Land M."/>
            <person name="Hauser L."/>
            <person name="Kyrpides N."/>
            <person name="Mikhailova N."/>
            <person name="Ingram L."/>
            <person name="Richardson P."/>
        </authorList>
    </citation>
    <scope>NUCLEOTIDE SEQUENCE [LARGE SCALE GENOMIC DNA]</scope>
    <source>
        <strain>ATCC 8739 / DSM 1576 / NBRC 3972 / NCIMB 8545 / WDCM 00012 / Crooks</strain>
    </source>
</reference>
<accession>B1IV89</accession>
<dbReference type="EC" id="1.1.1.298" evidence="1"/>
<dbReference type="EMBL" id="CP000946">
    <property type="protein sequence ID" value="ACA78218.1"/>
    <property type="molecule type" value="Genomic_DNA"/>
</dbReference>
<dbReference type="RefSeq" id="WP_001001189.1">
    <property type="nucleotide sequence ID" value="NZ_MTFT01000050.1"/>
</dbReference>
<dbReference type="SMR" id="B1IV89"/>
<dbReference type="KEGG" id="ecl:EcolC_2587"/>
<dbReference type="HOGENOM" id="CLU_084441_0_0_6"/>
<dbReference type="GO" id="GO:0035527">
    <property type="term" value="F:3-hydroxypropionate dehydrogenase (NADP+) activity"/>
    <property type="evidence" value="ECO:0007669"/>
    <property type="project" value="UniProtKB-UniRule"/>
</dbReference>
<dbReference type="GO" id="GO:0019740">
    <property type="term" value="P:nitrogen utilization"/>
    <property type="evidence" value="ECO:0007669"/>
    <property type="project" value="UniProtKB-UniRule"/>
</dbReference>
<dbReference type="GO" id="GO:0006212">
    <property type="term" value="P:uracil catabolic process"/>
    <property type="evidence" value="ECO:0007669"/>
    <property type="project" value="UniProtKB-UniRule"/>
</dbReference>
<dbReference type="CDD" id="cd02148">
    <property type="entry name" value="RutE-like"/>
    <property type="match status" value="1"/>
</dbReference>
<dbReference type="FunFam" id="3.40.109.10:FF:000003">
    <property type="entry name" value="Probable malonic semialdehyde reductase RutE"/>
    <property type="match status" value="1"/>
</dbReference>
<dbReference type="Gene3D" id="3.40.109.10">
    <property type="entry name" value="NADH Oxidase"/>
    <property type="match status" value="1"/>
</dbReference>
<dbReference type="HAMAP" id="MF_01204">
    <property type="entry name" value="Oxidoreductase_RutE_HadB"/>
    <property type="match status" value="1"/>
</dbReference>
<dbReference type="InterPro" id="IPR029479">
    <property type="entry name" value="Nitroreductase"/>
</dbReference>
<dbReference type="InterPro" id="IPR000415">
    <property type="entry name" value="Nitroreductase-like"/>
</dbReference>
<dbReference type="InterPro" id="IPR050461">
    <property type="entry name" value="Nitroreductase_HadB/RutE"/>
</dbReference>
<dbReference type="InterPro" id="IPR023936">
    <property type="entry name" value="RutE-like"/>
</dbReference>
<dbReference type="NCBIfam" id="NF003768">
    <property type="entry name" value="PRK05365.1"/>
    <property type="match status" value="1"/>
</dbReference>
<dbReference type="PANTHER" id="PTHR43543">
    <property type="entry name" value="MALONIC SEMIALDEHYDE REDUCTASE RUTE-RELATED"/>
    <property type="match status" value="1"/>
</dbReference>
<dbReference type="PANTHER" id="PTHR43543:SF1">
    <property type="entry name" value="MALONIC SEMIALDEHYDE REDUCTASE RUTE-RELATED"/>
    <property type="match status" value="1"/>
</dbReference>
<dbReference type="Pfam" id="PF00881">
    <property type="entry name" value="Nitroreductase"/>
    <property type="match status" value="1"/>
</dbReference>
<dbReference type="SUPFAM" id="SSF55469">
    <property type="entry name" value="FMN-dependent nitroreductase-like"/>
    <property type="match status" value="1"/>
</dbReference>